<proteinExistence type="predicted"/>
<name>Y1486_MYCTO</name>
<reference key="1">
    <citation type="journal article" date="2002" name="J. Bacteriol.">
        <title>Whole-genome comparison of Mycobacterium tuberculosis clinical and laboratory strains.</title>
        <authorList>
            <person name="Fleischmann R.D."/>
            <person name="Alland D."/>
            <person name="Eisen J.A."/>
            <person name="Carpenter L."/>
            <person name="White O."/>
            <person name="Peterson J.D."/>
            <person name="DeBoy R.T."/>
            <person name="Dodson R.J."/>
            <person name="Gwinn M.L."/>
            <person name="Haft D.H."/>
            <person name="Hickey E.K."/>
            <person name="Kolonay J.F."/>
            <person name="Nelson W.C."/>
            <person name="Umayam L.A."/>
            <person name="Ermolaeva M.D."/>
            <person name="Salzberg S.L."/>
            <person name="Delcher A."/>
            <person name="Utterback T.R."/>
            <person name="Weidman J.F."/>
            <person name="Khouri H.M."/>
            <person name="Gill J."/>
            <person name="Mikula A."/>
            <person name="Bishai W."/>
            <person name="Jacobs W.R. Jr."/>
            <person name="Venter J.C."/>
            <person name="Fraser C.M."/>
        </authorList>
    </citation>
    <scope>NUCLEOTIDE SEQUENCE [LARGE SCALE GENOMIC DNA]</scope>
    <source>
        <strain>CDC 1551 / Oshkosh</strain>
    </source>
</reference>
<protein>
    <recommendedName>
        <fullName>Uncharacterized protein MT1533</fullName>
    </recommendedName>
</protein>
<gene>
    <name type="ordered locus">MT1533</name>
</gene>
<accession>P9WLX2</accession>
<accession>L0T6T0</accession>
<accession>P71766</accession>
<keyword id="KW-1185">Reference proteome</keyword>
<feature type="chain" id="PRO_0000427404" description="Uncharacterized protein MT1533">
    <location>
        <begin position="1"/>
        <end position="288"/>
    </location>
</feature>
<organism>
    <name type="scientific">Mycobacterium tuberculosis (strain CDC 1551 / Oshkosh)</name>
    <dbReference type="NCBI Taxonomy" id="83331"/>
    <lineage>
        <taxon>Bacteria</taxon>
        <taxon>Bacillati</taxon>
        <taxon>Actinomycetota</taxon>
        <taxon>Actinomycetes</taxon>
        <taxon>Mycobacteriales</taxon>
        <taxon>Mycobacteriaceae</taxon>
        <taxon>Mycobacterium</taxon>
        <taxon>Mycobacterium tuberculosis complex</taxon>
    </lineage>
</organism>
<comment type="similarity">
    <text evidence="1">To M.bovis Mb1522c, M.leprae ML1804 and M.avium MAV321.</text>
</comment>
<dbReference type="EMBL" id="AE000516">
    <property type="protein sequence ID" value="AAK45798.1"/>
    <property type="molecule type" value="Genomic_DNA"/>
</dbReference>
<dbReference type="PIR" id="A70711">
    <property type="entry name" value="A70711"/>
</dbReference>
<dbReference type="RefSeq" id="WP_003902086.1">
    <property type="nucleotide sequence ID" value="NZ_KK341227.1"/>
</dbReference>
<dbReference type="SMR" id="P9WLX2"/>
<dbReference type="KEGG" id="mtc:MT1533"/>
<dbReference type="PATRIC" id="fig|83331.31.peg.1648"/>
<dbReference type="HOGENOM" id="CLU_086002_0_0_11"/>
<dbReference type="Proteomes" id="UP000001020">
    <property type="component" value="Chromosome"/>
</dbReference>
<evidence type="ECO:0000305" key="1"/>
<sequence length="288" mass="30115">MWCPSVSLSIWANAWLAGKAAPDDVLDALSLWAPTQSVAAYDAVAAGHTGLPWPDVHDAGTVSLLQTLRAAVGRRRLRGTINVVLPVPGDVRGLAAGTQFEHDALAAGEAVIVANPEDPGSAVGLVPEFSYGDVDEAAQSEPLTPELCALSWMVYSLPGAPVLEHYELGDAEYALRSAVRSAAEALSTIGLGSSDVANPRGLVEQLLESSRQHRVPDHAPSRALRVLENAAHVDAIIAVSAGLSRLPIGTQSLSDAQRATDALRPLTAVVRSARMSAVTAILHSAWPD</sequence>